<organism>
    <name type="scientific">Arabidopsis thaliana</name>
    <name type="common">Mouse-ear cress</name>
    <dbReference type="NCBI Taxonomy" id="3702"/>
    <lineage>
        <taxon>Eukaryota</taxon>
        <taxon>Viridiplantae</taxon>
        <taxon>Streptophyta</taxon>
        <taxon>Embryophyta</taxon>
        <taxon>Tracheophyta</taxon>
        <taxon>Spermatophyta</taxon>
        <taxon>Magnoliopsida</taxon>
        <taxon>eudicotyledons</taxon>
        <taxon>Gunneridae</taxon>
        <taxon>Pentapetalae</taxon>
        <taxon>rosids</taxon>
        <taxon>malvids</taxon>
        <taxon>Brassicales</taxon>
        <taxon>Brassicaceae</taxon>
        <taxon>Camelineae</taxon>
        <taxon>Arabidopsis</taxon>
    </lineage>
</organism>
<name>AIL1_ARATH</name>
<proteinExistence type="evidence at protein level"/>
<evidence type="ECO:0000250" key="1">
    <source>
        <dbReference type="UniProtKB" id="Q9LND1"/>
    </source>
</evidence>
<evidence type="ECO:0000255" key="2">
    <source>
        <dbReference type="PROSITE-ProRule" id="PRU00366"/>
    </source>
</evidence>
<evidence type="ECO:0000269" key="3">
    <source>
    </source>
</evidence>
<evidence type="ECO:0000269" key="4">
    <source>
    </source>
</evidence>
<evidence type="ECO:0000303" key="5">
    <source>
    </source>
</evidence>
<evidence type="ECO:0000305" key="6"/>
<evidence type="ECO:0000312" key="7">
    <source>
        <dbReference type="Araport" id="AT1G72570"/>
    </source>
</evidence>
<evidence type="ECO:0000312" key="8">
    <source>
        <dbReference type="EMBL" id="AAG51860.1"/>
    </source>
</evidence>
<comment type="function">
    <text evidence="1">Probably acts as a transcriptional activator. Binds to the GCC-box pathogenesis-related promoter element. May be involved in the regulation of gene expression by stress factors and by components of stress signal transduction pathways.</text>
</comment>
<comment type="subunit">
    <text evidence="4">Interacts with ANL2, HDG2 and HDG10, and possibly with GL2, HDG3, ATML1 and PDF2.</text>
</comment>
<comment type="subcellular location">
    <subcellularLocation>
        <location evidence="6">Nucleus</location>
    </subcellularLocation>
</comment>
<comment type="tissue specificity">
    <text evidence="3">Expressed in roots, seedlings, inflorescence, and siliques. Also detected at low levels in leaves.</text>
</comment>
<comment type="similarity">
    <text evidence="6">Belongs to the AP2/ERF transcription factor family. AP2 subfamily.</text>
</comment>
<comment type="sequence caution" evidence="6">
    <conflict type="erroneous gene model prediction">
        <sequence resource="EMBL-CDS" id="AAG51860"/>
    </conflict>
</comment>
<comment type="sequence caution" evidence="6">
    <conflict type="erroneous termination">
        <sequence resource="EMBL-CDS" id="ABK28464"/>
    </conflict>
    <text>Extended C-terminus.</text>
</comment>
<feature type="chain" id="PRO_0000290362" description="AP2-like ethylene-responsive transcription factor AIL1">
    <location>
        <begin position="1"/>
        <end position="415"/>
    </location>
</feature>
<feature type="DNA-binding region" description="AP2/ERF 1" evidence="2">
    <location>
        <begin position="223"/>
        <end position="289"/>
    </location>
</feature>
<feature type="DNA-binding region" description="AP2/ERF 2" evidence="2">
    <location>
        <begin position="325"/>
        <end position="383"/>
    </location>
</feature>
<feature type="sequence conflict" description="In Ref. 1; AAT12507." evidence="6" ref="1">
    <original>Y</original>
    <variation>F</variation>
    <location>
        <position position="96"/>
    </location>
</feature>
<feature type="sequence conflict" description="In Ref. 1; AAT12507." evidence="6" ref="1">
    <original>V</original>
    <variation>F</variation>
    <location>
        <position position="116"/>
    </location>
</feature>
<feature type="sequence conflict" description="In Ref. 1; AAT12507." evidence="6" ref="1">
    <original>FK</original>
    <variation>SN</variation>
    <location>
        <begin position="119"/>
        <end position="120"/>
    </location>
</feature>
<gene>
    <name evidence="5" type="primary">AIL1</name>
    <name evidence="7" type="ordered locus">At1g72570</name>
    <name evidence="8" type="ORF">F28P22.24</name>
</gene>
<keyword id="KW-0010">Activator</keyword>
<keyword id="KW-0238">DNA-binding</keyword>
<keyword id="KW-0936">Ethylene signaling pathway</keyword>
<keyword id="KW-0539">Nucleus</keyword>
<keyword id="KW-1185">Reference proteome</keyword>
<keyword id="KW-0677">Repeat</keyword>
<keyword id="KW-0804">Transcription</keyword>
<keyword id="KW-0805">Transcription regulation</keyword>
<sequence>MKKWLGFSLTPPLRICNSEEEELRHDGSDVWRYDINFDHHHHDEDVPKVEDLLSNSHQTEYPINHNQTNVNCTTVVNRLNPPGYLLHDQTVVTPHYPNLDPNLSNDYGGFERVGSVSVFKSWLEQGTPAFPLSSHYVTEEAGTSNNISHFSNEETGYNTNGSMLSLALSHGACSDLINESNVSARVEEPVKVDEKRKRLVVKPQVKESVPRKSVDSYGQRTSQYRGVTRHRWTGRYEAHLWDNSCKKEGQTRRGRQVYLGGYDEEEKAARAYDLAALKYWGPTTHLNFPLSNYEKEIEELNNMNRQEFVAMLRRNSSGFSRGASVYRGVTRHHQHGRWQARIGRVAGNKDLYLGTFSTQEEAAEAYDIAAIKFRGLNAVTNFDINRYDVKRICSSSTIVDSDQAKHSPTSSGAGH</sequence>
<reference key="1">
    <citation type="submission" date="2004-04" db="EMBL/GenBank/DDBJ databases">
        <title>Molecular cloning, expression, phylogenetic and functional characterization of the Arabidopsis AP2/EREBP transcription factor family.</title>
        <authorList>
            <person name="Pan Y."/>
            <person name="Gong W."/>
            <person name="Liu D."/>
            <person name="Fu Q."/>
            <person name="Mei W.-Q."/>
            <person name="Song W.-Q."/>
            <person name="Ma L.-G."/>
            <person name="Luo J.-C."/>
            <person name="Deng X.-W."/>
            <person name="Zhu Y.-X."/>
        </authorList>
    </citation>
    <scope>NUCLEOTIDE SEQUENCE [MRNA]</scope>
</reference>
<reference key="2">
    <citation type="journal article" date="2000" name="Nature">
        <title>Sequence and analysis of chromosome 1 of the plant Arabidopsis thaliana.</title>
        <authorList>
            <person name="Theologis A."/>
            <person name="Ecker J.R."/>
            <person name="Palm C.J."/>
            <person name="Federspiel N.A."/>
            <person name="Kaul S."/>
            <person name="White O."/>
            <person name="Alonso J."/>
            <person name="Altafi H."/>
            <person name="Araujo R."/>
            <person name="Bowman C.L."/>
            <person name="Brooks S.Y."/>
            <person name="Buehler E."/>
            <person name="Chan A."/>
            <person name="Chao Q."/>
            <person name="Chen H."/>
            <person name="Cheuk R.F."/>
            <person name="Chin C.W."/>
            <person name="Chung M.K."/>
            <person name="Conn L."/>
            <person name="Conway A.B."/>
            <person name="Conway A.R."/>
            <person name="Creasy T.H."/>
            <person name="Dewar K."/>
            <person name="Dunn P."/>
            <person name="Etgu P."/>
            <person name="Feldblyum T.V."/>
            <person name="Feng J.-D."/>
            <person name="Fong B."/>
            <person name="Fujii C.Y."/>
            <person name="Gill J.E."/>
            <person name="Goldsmith A.D."/>
            <person name="Haas B."/>
            <person name="Hansen N.F."/>
            <person name="Hughes B."/>
            <person name="Huizar L."/>
            <person name="Hunter J.L."/>
            <person name="Jenkins J."/>
            <person name="Johnson-Hopson C."/>
            <person name="Khan S."/>
            <person name="Khaykin E."/>
            <person name="Kim C.J."/>
            <person name="Koo H.L."/>
            <person name="Kremenetskaia I."/>
            <person name="Kurtz D.B."/>
            <person name="Kwan A."/>
            <person name="Lam B."/>
            <person name="Langin-Hooper S."/>
            <person name="Lee A."/>
            <person name="Lee J.M."/>
            <person name="Lenz C.A."/>
            <person name="Li J.H."/>
            <person name="Li Y.-P."/>
            <person name="Lin X."/>
            <person name="Liu S.X."/>
            <person name="Liu Z.A."/>
            <person name="Luros J.S."/>
            <person name="Maiti R."/>
            <person name="Marziali A."/>
            <person name="Militscher J."/>
            <person name="Miranda M."/>
            <person name="Nguyen M."/>
            <person name="Nierman W.C."/>
            <person name="Osborne B.I."/>
            <person name="Pai G."/>
            <person name="Peterson J."/>
            <person name="Pham P.K."/>
            <person name="Rizzo M."/>
            <person name="Rooney T."/>
            <person name="Rowley D."/>
            <person name="Sakano H."/>
            <person name="Salzberg S.L."/>
            <person name="Schwartz J.R."/>
            <person name="Shinn P."/>
            <person name="Southwick A.M."/>
            <person name="Sun H."/>
            <person name="Tallon L.J."/>
            <person name="Tambunga G."/>
            <person name="Toriumi M.J."/>
            <person name="Town C.D."/>
            <person name="Utterback T."/>
            <person name="Van Aken S."/>
            <person name="Vaysberg M."/>
            <person name="Vysotskaia V.S."/>
            <person name="Walker M."/>
            <person name="Wu D."/>
            <person name="Yu G."/>
            <person name="Fraser C.M."/>
            <person name="Venter J.C."/>
            <person name="Davis R.W."/>
        </authorList>
    </citation>
    <scope>NUCLEOTIDE SEQUENCE [LARGE SCALE GENOMIC DNA]</scope>
    <source>
        <strain>cv. Columbia</strain>
    </source>
</reference>
<reference key="3">
    <citation type="journal article" date="2017" name="Plant J.">
        <title>Araport11: a complete reannotation of the Arabidopsis thaliana reference genome.</title>
        <authorList>
            <person name="Cheng C.Y."/>
            <person name="Krishnakumar V."/>
            <person name="Chan A.P."/>
            <person name="Thibaud-Nissen F."/>
            <person name="Schobel S."/>
            <person name="Town C.D."/>
        </authorList>
    </citation>
    <scope>GENOME REANNOTATION</scope>
    <source>
        <strain>cv. Columbia</strain>
    </source>
</reference>
<reference key="4">
    <citation type="journal article" date="2006" name="Plant Biotechnol. J.">
        <title>Simultaneous high-throughput recombinational cloning of open reading frames in closed and open configurations.</title>
        <authorList>
            <person name="Underwood B.A."/>
            <person name="Vanderhaeghen R."/>
            <person name="Whitford R."/>
            <person name="Town C.D."/>
            <person name="Hilson P."/>
        </authorList>
    </citation>
    <scope>NUCLEOTIDE SEQUENCE [LARGE SCALE MRNA]</scope>
    <source>
        <strain>cv. Columbia</strain>
    </source>
</reference>
<reference key="5">
    <citation type="journal article" date="2005" name="Plant Mol. Biol.">
        <title>AINTEGUMENTA-like (AIL) genes are expressed in young tissues and may specify meristematic or division-competent states.</title>
        <authorList>
            <person name="Nole-Wilson S."/>
            <person name="Tranby T.L."/>
            <person name="Krizek B.A."/>
        </authorList>
    </citation>
    <scope>TISSUE SPECIFICITY</scope>
</reference>
<reference key="6">
    <citation type="journal article" date="2006" name="Plant Physiol.">
        <title>Genome-wide analysis of the ERF gene family in Arabidopsis and rice.</title>
        <authorList>
            <person name="Nakano T."/>
            <person name="Suzuki K."/>
            <person name="Fujimura T."/>
            <person name="Shinshi H."/>
        </authorList>
    </citation>
    <scope>GENE FAMILY</scope>
    <scope>NOMENCLATURE</scope>
</reference>
<reference key="7">
    <citation type="journal article" date="2015" name="Development">
        <title>AIL and HDG proteins act antagonistically to control cell proliferation.</title>
        <authorList>
            <person name="Horstman A."/>
            <person name="Fukuoka H."/>
            <person name="Muino J.M."/>
            <person name="Nitsch L."/>
            <person name="Guo C."/>
            <person name="Passarinho P."/>
            <person name="Sanchez-Perez G."/>
            <person name="Immink R."/>
            <person name="Angenent G."/>
            <person name="Boutilier K."/>
        </authorList>
    </citation>
    <scope>INTERACTION WITH ANL2; HDG2; HDG10; GL2; HDG3; ATML1 AND PDF2</scope>
    <source>
        <strain>cv. Columbia</strain>
    </source>
</reference>
<dbReference type="EMBL" id="AY603417">
    <property type="protein sequence ID" value="AAT12507.1"/>
    <property type="molecule type" value="mRNA"/>
</dbReference>
<dbReference type="EMBL" id="AC010926">
    <property type="protein sequence ID" value="AAG51860.1"/>
    <property type="status" value="ALT_SEQ"/>
    <property type="molecule type" value="Genomic_DNA"/>
</dbReference>
<dbReference type="EMBL" id="CP002684">
    <property type="protein sequence ID" value="AEE35343.1"/>
    <property type="molecule type" value="Genomic_DNA"/>
</dbReference>
<dbReference type="EMBL" id="DQ446422">
    <property type="protein sequence ID" value="ABE65765.1"/>
    <property type="molecule type" value="mRNA"/>
</dbReference>
<dbReference type="EMBL" id="DQ652930">
    <property type="protein sequence ID" value="ABK28464.1"/>
    <property type="status" value="ALT_SEQ"/>
    <property type="molecule type" value="mRNA"/>
</dbReference>
<dbReference type="PIR" id="B96750">
    <property type="entry name" value="B96750"/>
</dbReference>
<dbReference type="RefSeq" id="NP_177401.2">
    <property type="nucleotide sequence ID" value="NM_105916.2"/>
</dbReference>
<dbReference type="SMR" id="Q1PFE1"/>
<dbReference type="BioGRID" id="28808">
    <property type="interactions" value="12"/>
</dbReference>
<dbReference type="IntAct" id="Q1PFE1">
    <property type="interactions" value="12"/>
</dbReference>
<dbReference type="STRING" id="3702.Q1PFE1"/>
<dbReference type="iPTMnet" id="Q1PFE1"/>
<dbReference type="PaxDb" id="3702-AT1G72570.1"/>
<dbReference type="ProteomicsDB" id="245036"/>
<dbReference type="EnsemblPlants" id="AT1G72570.1">
    <property type="protein sequence ID" value="AT1G72570.1"/>
    <property type="gene ID" value="AT1G72570"/>
</dbReference>
<dbReference type="GeneID" id="843589"/>
<dbReference type="Gramene" id="AT1G72570.1">
    <property type="protein sequence ID" value="AT1G72570.1"/>
    <property type="gene ID" value="AT1G72570"/>
</dbReference>
<dbReference type="KEGG" id="ath:AT1G72570"/>
<dbReference type="Araport" id="AT1G72570"/>
<dbReference type="TAIR" id="AT1G72570">
    <property type="gene designation" value="AIL1"/>
</dbReference>
<dbReference type="eggNOG" id="ENOG502QYT4">
    <property type="taxonomic scope" value="Eukaryota"/>
</dbReference>
<dbReference type="HOGENOM" id="CLU_013549_6_0_1"/>
<dbReference type="InParanoid" id="Q1PFE1"/>
<dbReference type="OMA" id="GYLLCEQ"/>
<dbReference type="PhylomeDB" id="Q1PFE1"/>
<dbReference type="PRO" id="PR:Q1PFE1"/>
<dbReference type="Proteomes" id="UP000006548">
    <property type="component" value="Chromosome 1"/>
</dbReference>
<dbReference type="ExpressionAtlas" id="Q1PFE1">
    <property type="expression patterns" value="baseline and differential"/>
</dbReference>
<dbReference type="GO" id="GO:0005634">
    <property type="term" value="C:nucleus"/>
    <property type="evidence" value="ECO:0007669"/>
    <property type="project" value="UniProtKB-SubCell"/>
</dbReference>
<dbReference type="GO" id="GO:0003700">
    <property type="term" value="F:DNA-binding transcription factor activity"/>
    <property type="evidence" value="ECO:0000250"/>
    <property type="project" value="TAIR"/>
</dbReference>
<dbReference type="GO" id="GO:0000976">
    <property type="term" value="F:transcription cis-regulatory region binding"/>
    <property type="evidence" value="ECO:0000353"/>
    <property type="project" value="TAIR"/>
</dbReference>
<dbReference type="GO" id="GO:0009873">
    <property type="term" value="P:ethylene-activated signaling pathway"/>
    <property type="evidence" value="ECO:0007669"/>
    <property type="project" value="UniProtKB-KW"/>
</dbReference>
<dbReference type="CDD" id="cd00018">
    <property type="entry name" value="AP2"/>
    <property type="match status" value="2"/>
</dbReference>
<dbReference type="FunFam" id="3.30.730.10:FF:000002">
    <property type="entry name" value="AP2-like ethylene-responsive transcription factor"/>
    <property type="match status" value="1"/>
</dbReference>
<dbReference type="FunFam" id="3.30.730.10:FF:000003">
    <property type="entry name" value="AP2-like ethylene-responsive transcription factor ANT"/>
    <property type="match status" value="1"/>
</dbReference>
<dbReference type="Gene3D" id="3.30.730.10">
    <property type="entry name" value="AP2/ERF domain"/>
    <property type="match status" value="2"/>
</dbReference>
<dbReference type="InterPro" id="IPR001471">
    <property type="entry name" value="AP2/ERF_dom"/>
</dbReference>
<dbReference type="InterPro" id="IPR036955">
    <property type="entry name" value="AP2/ERF_dom_sf"/>
</dbReference>
<dbReference type="InterPro" id="IPR016177">
    <property type="entry name" value="DNA-bd_dom_sf"/>
</dbReference>
<dbReference type="PANTHER" id="PTHR32467">
    <property type="entry name" value="AP2-LIKE ETHYLENE-RESPONSIVE TRANSCRIPTION FACTOR"/>
    <property type="match status" value="1"/>
</dbReference>
<dbReference type="PANTHER" id="PTHR32467:SF90">
    <property type="entry name" value="AP2-LIKE ETHYLENE-RESPONSIVE TRANSCRIPTION FACTOR AIL1"/>
    <property type="match status" value="1"/>
</dbReference>
<dbReference type="Pfam" id="PF00847">
    <property type="entry name" value="AP2"/>
    <property type="match status" value="2"/>
</dbReference>
<dbReference type="PRINTS" id="PR00367">
    <property type="entry name" value="ETHRSPELEMNT"/>
</dbReference>
<dbReference type="SMART" id="SM00380">
    <property type="entry name" value="AP2"/>
    <property type="match status" value="2"/>
</dbReference>
<dbReference type="SUPFAM" id="SSF54171">
    <property type="entry name" value="DNA-binding domain"/>
    <property type="match status" value="2"/>
</dbReference>
<dbReference type="PROSITE" id="PS51032">
    <property type="entry name" value="AP2_ERF"/>
    <property type="match status" value="2"/>
</dbReference>
<accession>Q1PFE1</accession>
<accession>A0MEG0</accession>
<accession>Q6J335</accession>
<accession>Q9CAH3</accession>
<protein>
    <recommendedName>
        <fullName evidence="5">AP2-like ethylene-responsive transcription factor AIL1</fullName>
    </recommendedName>
    <alternativeName>
        <fullName evidence="5">Protein AINTEGUMENTA-LIKE 1</fullName>
    </alternativeName>
</protein>